<sequence length="116" mass="13694">MSRTGTWLKMLVAGTVICVGGPAFVQSIRPTDEELFKRYNPDLQKRSLEEGDRRAREFDEYVTRLKQWSKSDKSIWFAAQEQQEQKRAEIESQRSQAKEDARLQREEMRKELLGEK</sequence>
<protein>
    <recommendedName>
        <fullName>Assembly factor cbp4</fullName>
    </recommendedName>
    <alternativeName>
        <fullName>Cytochrome b mRNA-processing protein 4</fullName>
    </alternativeName>
</protein>
<accession>A1DLB6</accession>
<organism>
    <name type="scientific">Neosartorya fischeri (strain ATCC 1020 / DSM 3700 / CBS 544.65 / FGSC A1164 / JCM 1740 / NRRL 181 / WB 181)</name>
    <name type="common">Aspergillus fischerianus</name>
    <dbReference type="NCBI Taxonomy" id="331117"/>
    <lineage>
        <taxon>Eukaryota</taxon>
        <taxon>Fungi</taxon>
        <taxon>Dikarya</taxon>
        <taxon>Ascomycota</taxon>
        <taxon>Pezizomycotina</taxon>
        <taxon>Eurotiomycetes</taxon>
        <taxon>Eurotiomycetidae</taxon>
        <taxon>Eurotiales</taxon>
        <taxon>Aspergillaceae</taxon>
        <taxon>Aspergillus</taxon>
        <taxon>Aspergillus subgen. Fumigati</taxon>
    </lineage>
</organism>
<reference key="1">
    <citation type="journal article" date="2008" name="PLoS Genet.">
        <title>Genomic islands in the pathogenic filamentous fungus Aspergillus fumigatus.</title>
        <authorList>
            <person name="Fedorova N.D."/>
            <person name="Khaldi N."/>
            <person name="Joardar V.S."/>
            <person name="Maiti R."/>
            <person name="Amedeo P."/>
            <person name="Anderson M.J."/>
            <person name="Crabtree J."/>
            <person name="Silva J.C."/>
            <person name="Badger J.H."/>
            <person name="Albarraq A."/>
            <person name="Angiuoli S."/>
            <person name="Bussey H."/>
            <person name="Bowyer P."/>
            <person name="Cotty P.J."/>
            <person name="Dyer P.S."/>
            <person name="Egan A."/>
            <person name="Galens K."/>
            <person name="Fraser-Liggett C.M."/>
            <person name="Haas B.J."/>
            <person name="Inman J.M."/>
            <person name="Kent R."/>
            <person name="Lemieux S."/>
            <person name="Malavazi I."/>
            <person name="Orvis J."/>
            <person name="Roemer T."/>
            <person name="Ronning C.M."/>
            <person name="Sundaram J.P."/>
            <person name="Sutton G."/>
            <person name="Turner G."/>
            <person name="Venter J.C."/>
            <person name="White O.R."/>
            <person name="Whitty B.R."/>
            <person name="Youngman P."/>
            <person name="Wolfe K.H."/>
            <person name="Goldman G.H."/>
            <person name="Wortman J.R."/>
            <person name="Jiang B."/>
            <person name="Denning D.W."/>
            <person name="Nierman W.C."/>
        </authorList>
    </citation>
    <scope>NUCLEOTIDE SEQUENCE [LARGE SCALE GENOMIC DNA]</scope>
    <source>
        <strain>ATCC 1020 / DSM 3700 / CBS 544.65 / FGSC A1164 / JCM 1740 / NRRL 181 / WB 181</strain>
    </source>
</reference>
<dbReference type="EMBL" id="DS027698">
    <property type="protein sequence ID" value="EAW15587.1"/>
    <property type="molecule type" value="Genomic_DNA"/>
</dbReference>
<dbReference type="RefSeq" id="XP_001257484.1">
    <property type="nucleotide sequence ID" value="XM_001257483.1"/>
</dbReference>
<dbReference type="EnsemblFungi" id="EAW15587">
    <property type="protein sequence ID" value="EAW15587"/>
    <property type="gene ID" value="NFIA_049260"/>
</dbReference>
<dbReference type="GeneID" id="4583998"/>
<dbReference type="KEGG" id="nfi:NFIA_049260"/>
<dbReference type="VEuPathDB" id="FungiDB:NFIA_049260"/>
<dbReference type="eggNOG" id="ENOG502S2G8">
    <property type="taxonomic scope" value="Eukaryota"/>
</dbReference>
<dbReference type="HOGENOM" id="CLU_136894_0_0_1"/>
<dbReference type="OMA" id="DKPIWVV"/>
<dbReference type="OrthoDB" id="5576752at2759"/>
<dbReference type="Proteomes" id="UP000006702">
    <property type="component" value="Unassembled WGS sequence"/>
</dbReference>
<dbReference type="GO" id="GO:0005743">
    <property type="term" value="C:mitochondrial inner membrane"/>
    <property type="evidence" value="ECO:0007669"/>
    <property type="project" value="UniProtKB-SubCell"/>
</dbReference>
<dbReference type="GO" id="GO:0034551">
    <property type="term" value="P:mitochondrial respiratory chain complex III assembly"/>
    <property type="evidence" value="ECO:0007669"/>
    <property type="project" value="TreeGrafter"/>
</dbReference>
<dbReference type="InterPro" id="IPR012420">
    <property type="entry name" value="Cbp4"/>
</dbReference>
<dbReference type="PANTHER" id="PTHR28202">
    <property type="entry name" value="ASSEMBLY FACTOR CBP4"/>
    <property type="match status" value="1"/>
</dbReference>
<dbReference type="PANTHER" id="PTHR28202:SF1">
    <property type="entry name" value="ASSEMBLY FACTOR CBP4"/>
    <property type="match status" value="1"/>
</dbReference>
<dbReference type="Pfam" id="PF07960">
    <property type="entry name" value="CBP4"/>
    <property type="match status" value="1"/>
</dbReference>
<evidence type="ECO:0000250" key="1"/>
<evidence type="ECO:0000255" key="2"/>
<evidence type="ECO:0000256" key="3">
    <source>
        <dbReference type="SAM" id="MobiDB-lite"/>
    </source>
</evidence>
<evidence type="ECO:0000305" key="4"/>
<feature type="chain" id="PRO_0000330132" description="Assembly factor cbp4">
    <location>
        <begin position="1"/>
        <end position="116"/>
    </location>
</feature>
<feature type="transmembrane region" description="Helical" evidence="2">
    <location>
        <begin position="7"/>
        <end position="25"/>
    </location>
</feature>
<feature type="region of interest" description="Disordered" evidence="3">
    <location>
        <begin position="87"/>
        <end position="116"/>
    </location>
</feature>
<feature type="coiled-coil region" evidence="2">
    <location>
        <begin position="77"/>
        <end position="116"/>
    </location>
</feature>
<proteinExistence type="inferred from homology"/>
<keyword id="KW-0143">Chaperone</keyword>
<keyword id="KW-0175">Coiled coil</keyword>
<keyword id="KW-0472">Membrane</keyword>
<keyword id="KW-0496">Mitochondrion</keyword>
<keyword id="KW-0999">Mitochondrion inner membrane</keyword>
<keyword id="KW-1185">Reference proteome</keyword>
<keyword id="KW-0812">Transmembrane</keyword>
<keyword id="KW-1133">Transmembrane helix</keyword>
<name>CBP4_NEOFI</name>
<comment type="function">
    <text evidence="1">Essential for the assembly of ubiquinol-cytochrome c reductase. It has a direct effect on the correct occurrence of the Rieske protein, core 4, core 5 and apocytochrome b (By similarity).</text>
</comment>
<comment type="subcellular location">
    <subcellularLocation>
        <location evidence="1">Mitochondrion inner membrane</location>
        <topology evidence="1">Single-pass membrane protein</topology>
    </subcellularLocation>
</comment>
<comment type="similarity">
    <text evidence="4">Belongs to the CBP4 family.</text>
</comment>
<gene>
    <name type="primary">cbp4</name>
    <name type="ORF">NFIA_049260</name>
</gene>